<name>SYGA_YERPN</name>
<accession>Q1CD85</accession>
<accession>D1Q271</accession>
<evidence type="ECO:0000255" key="1">
    <source>
        <dbReference type="HAMAP-Rule" id="MF_00254"/>
    </source>
</evidence>
<gene>
    <name evidence="1" type="primary">glyQ</name>
    <name type="ordered locus">YPN_3718</name>
    <name type="ORF">YP516_4227</name>
</gene>
<keyword id="KW-0030">Aminoacyl-tRNA synthetase</keyword>
<keyword id="KW-0067">ATP-binding</keyword>
<keyword id="KW-0963">Cytoplasm</keyword>
<keyword id="KW-0436">Ligase</keyword>
<keyword id="KW-0547">Nucleotide-binding</keyword>
<keyword id="KW-0648">Protein biosynthesis</keyword>
<reference key="1">
    <citation type="journal article" date="2006" name="J. Bacteriol.">
        <title>Complete genome sequence of Yersinia pestis strains Antiqua and Nepal516: evidence of gene reduction in an emerging pathogen.</title>
        <authorList>
            <person name="Chain P.S.G."/>
            <person name="Hu P."/>
            <person name="Malfatti S.A."/>
            <person name="Radnedge L."/>
            <person name="Larimer F."/>
            <person name="Vergez L.M."/>
            <person name="Worsham P."/>
            <person name="Chu M.C."/>
            <person name="Andersen G.L."/>
        </authorList>
    </citation>
    <scope>NUCLEOTIDE SEQUENCE [LARGE SCALE GENOMIC DNA]</scope>
    <source>
        <strain>Nepal516</strain>
    </source>
</reference>
<reference key="2">
    <citation type="submission" date="2009-04" db="EMBL/GenBank/DDBJ databases">
        <title>Yersinia pestis Nepal516A whole genome shotgun sequencing project.</title>
        <authorList>
            <person name="Plunkett G. III"/>
            <person name="Anderson B.D."/>
            <person name="Baumler D.J."/>
            <person name="Burland V."/>
            <person name="Cabot E.L."/>
            <person name="Glasner J.D."/>
            <person name="Mau B."/>
            <person name="Neeno-Eckwall E."/>
            <person name="Perna N.T."/>
            <person name="Munk A.C."/>
            <person name="Tapia R."/>
            <person name="Green L.D."/>
            <person name="Rogers Y.C."/>
            <person name="Detter J.C."/>
            <person name="Bruce D.C."/>
            <person name="Brettin T.S."/>
        </authorList>
    </citation>
    <scope>NUCLEOTIDE SEQUENCE [LARGE SCALE GENOMIC DNA]</scope>
    <source>
        <strain>Nepal516</strain>
    </source>
</reference>
<organism>
    <name type="scientific">Yersinia pestis bv. Antiqua (strain Nepal516)</name>
    <dbReference type="NCBI Taxonomy" id="377628"/>
    <lineage>
        <taxon>Bacteria</taxon>
        <taxon>Pseudomonadati</taxon>
        <taxon>Pseudomonadota</taxon>
        <taxon>Gammaproteobacteria</taxon>
        <taxon>Enterobacterales</taxon>
        <taxon>Yersiniaceae</taxon>
        <taxon>Yersinia</taxon>
    </lineage>
</organism>
<sequence length="304" mass="34758">MQKFDTKTFQGLILTLQDYWARQGCTIVQPLDMEVGAGTSHPMTCLRAIGPEPIAAAYVQPSRRPTDGRYGENPNRLQHYYQFQVIIKPSPDNIQELYLGSLKELGLDPTIHDIRFVEDNWENPTLGAWGLGWEVWLNGMEVTQFTYFQQVGGLECKPVTGEITYGLERLAMYIQGVDSVYDLIWCDGPLGTTTYGDIYHQNEVEQSTYNFEYADVDFLFSCFEQYEKEAQSLLALETPLPLPAYERILKAGHTFNLLDARKAISVTERQRYILRIRTLTKAVAEAYYASREALGFPMCKKNQN</sequence>
<feature type="chain" id="PRO_1000047534" description="Glycine--tRNA ligase alpha subunit">
    <location>
        <begin position="1"/>
        <end position="304"/>
    </location>
</feature>
<protein>
    <recommendedName>
        <fullName evidence="1">Glycine--tRNA ligase alpha subunit</fullName>
        <ecNumber evidence="1">6.1.1.14</ecNumber>
    </recommendedName>
    <alternativeName>
        <fullName evidence="1">Glycyl-tRNA synthetase alpha subunit</fullName>
        <shortName evidence="1">GlyRS</shortName>
    </alternativeName>
</protein>
<dbReference type="EC" id="6.1.1.14" evidence="1"/>
<dbReference type="EMBL" id="CP000305">
    <property type="protein sequence ID" value="ABG20045.1"/>
    <property type="molecule type" value="Genomic_DNA"/>
</dbReference>
<dbReference type="EMBL" id="ACNQ01000019">
    <property type="protein sequence ID" value="EEO74624.1"/>
    <property type="molecule type" value="Genomic_DNA"/>
</dbReference>
<dbReference type="RefSeq" id="WP_002209624.1">
    <property type="nucleotide sequence ID" value="NZ_ACNQ01000019.1"/>
</dbReference>
<dbReference type="SMR" id="Q1CD85"/>
<dbReference type="GeneID" id="96663419"/>
<dbReference type="KEGG" id="ypn:YPN_3718"/>
<dbReference type="HOGENOM" id="CLU_057066_1_0_6"/>
<dbReference type="Proteomes" id="UP000008936">
    <property type="component" value="Chromosome"/>
</dbReference>
<dbReference type="GO" id="GO:0005829">
    <property type="term" value="C:cytosol"/>
    <property type="evidence" value="ECO:0007669"/>
    <property type="project" value="TreeGrafter"/>
</dbReference>
<dbReference type="GO" id="GO:0005524">
    <property type="term" value="F:ATP binding"/>
    <property type="evidence" value="ECO:0007669"/>
    <property type="project" value="UniProtKB-UniRule"/>
</dbReference>
<dbReference type="GO" id="GO:0004820">
    <property type="term" value="F:glycine-tRNA ligase activity"/>
    <property type="evidence" value="ECO:0007669"/>
    <property type="project" value="UniProtKB-UniRule"/>
</dbReference>
<dbReference type="GO" id="GO:0006426">
    <property type="term" value="P:glycyl-tRNA aminoacylation"/>
    <property type="evidence" value="ECO:0007669"/>
    <property type="project" value="UniProtKB-UniRule"/>
</dbReference>
<dbReference type="CDD" id="cd00733">
    <property type="entry name" value="GlyRS_alpha_core"/>
    <property type="match status" value="1"/>
</dbReference>
<dbReference type="FunFam" id="1.20.58.180:FF:000001">
    <property type="entry name" value="Glycine--tRNA ligase alpha subunit"/>
    <property type="match status" value="1"/>
</dbReference>
<dbReference type="FunFam" id="3.30.930.10:FF:000006">
    <property type="entry name" value="Glycine--tRNA ligase alpha subunit"/>
    <property type="match status" value="1"/>
</dbReference>
<dbReference type="Gene3D" id="3.30.930.10">
    <property type="entry name" value="Bira Bifunctional Protein, Domain 2"/>
    <property type="match status" value="1"/>
</dbReference>
<dbReference type="Gene3D" id="1.20.58.180">
    <property type="entry name" value="Class II aaRS and biotin synthetases, domain 2"/>
    <property type="match status" value="1"/>
</dbReference>
<dbReference type="HAMAP" id="MF_00254">
    <property type="entry name" value="Gly_tRNA_synth_alpha"/>
    <property type="match status" value="1"/>
</dbReference>
<dbReference type="InterPro" id="IPR045864">
    <property type="entry name" value="aa-tRNA-synth_II/BPL/LPL"/>
</dbReference>
<dbReference type="InterPro" id="IPR006194">
    <property type="entry name" value="Gly-tRNA-synth_heterodimer"/>
</dbReference>
<dbReference type="InterPro" id="IPR002310">
    <property type="entry name" value="Gly-tRNA_ligase_asu"/>
</dbReference>
<dbReference type="NCBIfam" id="TIGR00388">
    <property type="entry name" value="glyQ"/>
    <property type="match status" value="1"/>
</dbReference>
<dbReference type="NCBIfam" id="NF006827">
    <property type="entry name" value="PRK09348.1"/>
    <property type="match status" value="1"/>
</dbReference>
<dbReference type="PANTHER" id="PTHR30075:SF2">
    <property type="entry name" value="GLYCINE--TRNA LIGASE, CHLOROPLASTIC_MITOCHONDRIAL 2"/>
    <property type="match status" value="1"/>
</dbReference>
<dbReference type="PANTHER" id="PTHR30075">
    <property type="entry name" value="GLYCYL-TRNA SYNTHETASE"/>
    <property type="match status" value="1"/>
</dbReference>
<dbReference type="Pfam" id="PF02091">
    <property type="entry name" value="tRNA-synt_2e"/>
    <property type="match status" value="1"/>
</dbReference>
<dbReference type="PRINTS" id="PR01044">
    <property type="entry name" value="TRNASYNTHGA"/>
</dbReference>
<dbReference type="SUPFAM" id="SSF55681">
    <property type="entry name" value="Class II aaRS and biotin synthetases"/>
    <property type="match status" value="1"/>
</dbReference>
<dbReference type="PROSITE" id="PS50861">
    <property type="entry name" value="AA_TRNA_LIGASE_II_GLYAB"/>
    <property type="match status" value="1"/>
</dbReference>
<proteinExistence type="inferred from homology"/>
<comment type="catalytic activity">
    <reaction evidence="1">
        <text>tRNA(Gly) + glycine + ATP = glycyl-tRNA(Gly) + AMP + diphosphate</text>
        <dbReference type="Rhea" id="RHEA:16013"/>
        <dbReference type="Rhea" id="RHEA-COMP:9664"/>
        <dbReference type="Rhea" id="RHEA-COMP:9683"/>
        <dbReference type="ChEBI" id="CHEBI:30616"/>
        <dbReference type="ChEBI" id="CHEBI:33019"/>
        <dbReference type="ChEBI" id="CHEBI:57305"/>
        <dbReference type="ChEBI" id="CHEBI:78442"/>
        <dbReference type="ChEBI" id="CHEBI:78522"/>
        <dbReference type="ChEBI" id="CHEBI:456215"/>
        <dbReference type="EC" id="6.1.1.14"/>
    </reaction>
</comment>
<comment type="subunit">
    <text evidence="1">Tetramer of two alpha and two beta subunits.</text>
</comment>
<comment type="subcellular location">
    <subcellularLocation>
        <location evidence="1">Cytoplasm</location>
    </subcellularLocation>
</comment>
<comment type="similarity">
    <text evidence="1">Belongs to the class-II aminoacyl-tRNA synthetase family.</text>
</comment>